<name>WDR33_HUMAN</name>
<evidence type="ECO:0000250" key="1">
    <source>
        <dbReference type="UniProtKB" id="Q8K4P0"/>
    </source>
</evidence>
<evidence type="ECO:0000256" key="2">
    <source>
        <dbReference type="SAM" id="MobiDB-lite"/>
    </source>
</evidence>
<evidence type="ECO:0000269" key="3">
    <source>
    </source>
</evidence>
<evidence type="ECO:0000269" key="4">
    <source>
    </source>
</evidence>
<evidence type="ECO:0000303" key="5">
    <source>
    </source>
</evidence>
<evidence type="ECO:0000303" key="6">
    <source>
    </source>
</evidence>
<evidence type="ECO:0000303" key="7">
    <source>
    </source>
</evidence>
<evidence type="ECO:0000303" key="8">
    <source ref="3"/>
</evidence>
<evidence type="ECO:0000305" key="9"/>
<evidence type="ECO:0007744" key="10">
    <source>
    </source>
</evidence>
<evidence type="ECO:0007744" key="11">
    <source>
    </source>
</evidence>
<evidence type="ECO:0007744" key="12">
    <source>
    </source>
</evidence>
<evidence type="ECO:0007744" key="13">
    <source>
    </source>
</evidence>
<evidence type="ECO:0007744" key="14">
    <source>
    </source>
</evidence>
<evidence type="ECO:0007744" key="15">
    <source>
    </source>
</evidence>
<evidence type="ECO:0007744" key="16">
    <source>
    </source>
</evidence>
<evidence type="ECO:0007744" key="17">
    <source>
    </source>
</evidence>
<evidence type="ECO:0007744" key="18">
    <source>
    </source>
</evidence>
<evidence type="ECO:0007744" key="19">
    <source>
    </source>
</evidence>
<evidence type="ECO:0007829" key="20">
    <source>
        <dbReference type="PDB" id="6BLY"/>
    </source>
</evidence>
<evidence type="ECO:0007829" key="21">
    <source>
        <dbReference type="PDB" id="6F9N"/>
    </source>
</evidence>
<evidence type="ECO:0007829" key="22">
    <source>
        <dbReference type="PDB" id="6URG"/>
    </source>
</evidence>
<evidence type="ECO:0007829" key="23">
    <source>
        <dbReference type="PDB" id="8E3I"/>
    </source>
</evidence>
<evidence type="ECO:0007829" key="24">
    <source>
        <dbReference type="PDB" id="8E3Q"/>
    </source>
</evidence>
<accession>Q9C0J8</accession>
<accession>Q05DP8</accession>
<accession>Q53FG9</accession>
<accession>Q587J1</accession>
<accession>Q69YF7</accession>
<accession>Q6NUQ0</accession>
<accession>Q9NUL1</accession>
<reference key="1">
    <citation type="journal article" date="2001" name="Biochem. Biophys. Res. Commun.">
        <title>A novel WD40 repeat protein, WDC146, highly expressed during spermatogenesis in a stage-specific manner.</title>
        <authorList>
            <person name="Ito S."/>
            <person name="Sakai A."/>
            <person name="Nomura T."/>
            <person name="Miki Y."/>
            <person name="Ouchida M."/>
            <person name="Sasaki J."/>
            <person name="Shimizu K."/>
        </authorList>
    </citation>
    <scope>NUCLEOTIDE SEQUENCE [MRNA] (ISOFORM 1)</scope>
    <scope>SUBCELLULAR LOCATION</scope>
    <scope>TISSUE SPECIFICITY</scope>
</reference>
<reference key="2">
    <citation type="journal article" date="2004" name="Nat. Genet.">
        <title>Complete sequencing and characterization of 21,243 full-length human cDNAs.</title>
        <authorList>
            <person name="Ota T."/>
            <person name="Suzuki Y."/>
            <person name="Nishikawa T."/>
            <person name="Otsuki T."/>
            <person name="Sugiyama T."/>
            <person name="Irie R."/>
            <person name="Wakamatsu A."/>
            <person name="Hayashi K."/>
            <person name="Sato H."/>
            <person name="Nagai K."/>
            <person name="Kimura K."/>
            <person name="Makita H."/>
            <person name="Sekine M."/>
            <person name="Obayashi M."/>
            <person name="Nishi T."/>
            <person name="Shibahara T."/>
            <person name="Tanaka T."/>
            <person name="Ishii S."/>
            <person name="Yamamoto J."/>
            <person name="Saito K."/>
            <person name="Kawai Y."/>
            <person name="Isono Y."/>
            <person name="Nakamura Y."/>
            <person name="Nagahari K."/>
            <person name="Murakami K."/>
            <person name="Yasuda T."/>
            <person name="Iwayanagi T."/>
            <person name="Wagatsuma M."/>
            <person name="Shiratori A."/>
            <person name="Sudo H."/>
            <person name="Hosoiri T."/>
            <person name="Kaku Y."/>
            <person name="Kodaira H."/>
            <person name="Kondo H."/>
            <person name="Sugawara M."/>
            <person name="Takahashi M."/>
            <person name="Kanda K."/>
            <person name="Yokoi T."/>
            <person name="Furuya T."/>
            <person name="Kikkawa E."/>
            <person name="Omura Y."/>
            <person name="Abe K."/>
            <person name="Kamihara K."/>
            <person name="Katsuta N."/>
            <person name="Sato K."/>
            <person name="Tanikawa M."/>
            <person name="Yamazaki M."/>
            <person name="Ninomiya K."/>
            <person name="Ishibashi T."/>
            <person name="Yamashita H."/>
            <person name="Murakawa K."/>
            <person name="Fujimori K."/>
            <person name="Tanai H."/>
            <person name="Kimata M."/>
            <person name="Watanabe M."/>
            <person name="Hiraoka S."/>
            <person name="Chiba Y."/>
            <person name="Ishida S."/>
            <person name="Ono Y."/>
            <person name="Takiguchi S."/>
            <person name="Watanabe S."/>
            <person name="Yosida M."/>
            <person name="Hotuta T."/>
            <person name="Kusano J."/>
            <person name="Kanehori K."/>
            <person name="Takahashi-Fujii A."/>
            <person name="Hara H."/>
            <person name="Tanase T.-O."/>
            <person name="Nomura Y."/>
            <person name="Togiya S."/>
            <person name="Komai F."/>
            <person name="Hara R."/>
            <person name="Takeuchi K."/>
            <person name="Arita M."/>
            <person name="Imose N."/>
            <person name="Musashino K."/>
            <person name="Yuuki H."/>
            <person name="Oshima A."/>
            <person name="Sasaki N."/>
            <person name="Aotsuka S."/>
            <person name="Yoshikawa Y."/>
            <person name="Matsunawa H."/>
            <person name="Ichihara T."/>
            <person name="Shiohata N."/>
            <person name="Sano S."/>
            <person name="Moriya S."/>
            <person name="Momiyama H."/>
            <person name="Satoh N."/>
            <person name="Takami S."/>
            <person name="Terashima Y."/>
            <person name="Suzuki O."/>
            <person name="Nakagawa S."/>
            <person name="Senoh A."/>
            <person name="Mizoguchi H."/>
            <person name="Goto Y."/>
            <person name="Shimizu F."/>
            <person name="Wakebe H."/>
            <person name="Hishigaki H."/>
            <person name="Watanabe T."/>
            <person name="Sugiyama A."/>
            <person name="Takemoto M."/>
            <person name="Kawakami B."/>
            <person name="Yamazaki M."/>
            <person name="Watanabe K."/>
            <person name="Kumagai A."/>
            <person name="Itakura S."/>
            <person name="Fukuzumi Y."/>
            <person name="Fujimori Y."/>
            <person name="Komiyama M."/>
            <person name="Tashiro H."/>
            <person name="Tanigami A."/>
            <person name="Fujiwara T."/>
            <person name="Ono T."/>
            <person name="Yamada K."/>
            <person name="Fujii Y."/>
            <person name="Ozaki K."/>
            <person name="Hirao M."/>
            <person name="Ohmori Y."/>
            <person name="Kawabata A."/>
            <person name="Hikiji T."/>
            <person name="Kobatake N."/>
            <person name="Inagaki H."/>
            <person name="Ikema Y."/>
            <person name="Okamoto S."/>
            <person name="Okitani R."/>
            <person name="Kawakami T."/>
            <person name="Noguchi S."/>
            <person name="Itoh T."/>
            <person name="Shigeta K."/>
            <person name="Senba T."/>
            <person name="Matsumura K."/>
            <person name="Nakajima Y."/>
            <person name="Mizuno T."/>
            <person name="Morinaga M."/>
            <person name="Sasaki M."/>
            <person name="Togashi T."/>
            <person name="Oyama M."/>
            <person name="Hata H."/>
            <person name="Watanabe M."/>
            <person name="Komatsu T."/>
            <person name="Mizushima-Sugano J."/>
            <person name="Satoh T."/>
            <person name="Shirai Y."/>
            <person name="Takahashi Y."/>
            <person name="Nakagawa K."/>
            <person name="Okumura K."/>
            <person name="Nagase T."/>
            <person name="Nomura N."/>
            <person name="Kikuchi H."/>
            <person name="Masuho Y."/>
            <person name="Yamashita R."/>
            <person name="Nakai K."/>
            <person name="Yada T."/>
            <person name="Nakamura Y."/>
            <person name="Ohara O."/>
            <person name="Isogai T."/>
            <person name="Sugano S."/>
        </authorList>
    </citation>
    <scope>NUCLEOTIDE SEQUENCE [LARGE SCALE MRNA] (ISOFORM 2)</scope>
    <source>
        <tissue>Placenta</tissue>
    </source>
</reference>
<reference key="3">
    <citation type="submission" date="2005-04" db="EMBL/GenBank/DDBJ databases">
        <authorList>
            <person name="Suzuki Y."/>
            <person name="Sugano S."/>
            <person name="Totoki Y."/>
            <person name="Toyoda A."/>
            <person name="Takeda T."/>
            <person name="Sakaki Y."/>
            <person name="Tanaka A."/>
            <person name="Yokoyama S."/>
        </authorList>
    </citation>
    <scope>NUCLEOTIDE SEQUENCE [LARGE SCALE MRNA] (ISOFORM 2)</scope>
    <source>
        <tissue>Small intestine</tissue>
    </source>
</reference>
<reference key="4">
    <citation type="journal article" date="2005" name="Nature">
        <title>Generation and annotation of the DNA sequences of human chromosomes 2 and 4.</title>
        <authorList>
            <person name="Hillier L.W."/>
            <person name="Graves T.A."/>
            <person name="Fulton R.S."/>
            <person name="Fulton L.A."/>
            <person name="Pepin K.H."/>
            <person name="Minx P."/>
            <person name="Wagner-McPherson C."/>
            <person name="Layman D."/>
            <person name="Wylie K."/>
            <person name="Sekhon M."/>
            <person name="Becker M.C."/>
            <person name="Fewell G.A."/>
            <person name="Delehaunty K.D."/>
            <person name="Miner T.L."/>
            <person name="Nash W.E."/>
            <person name="Kremitzki C."/>
            <person name="Oddy L."/>
            <person name="Du H."/>
            <person name="Sun H."/>
            <person name="Bradshaw-Cordum H."/>
            <person name="Ali J."/>
            <person name="Carter J."/>
            <person name="Cordes M."/>
            <person name="Harris A."/>
            <person name="Isak A."/>
            <person name="van Brunt A."/>
            <person name="Nguyen C."/>
            <person name="Du F."/>
            <person name="Courtney L."/>
            <person name="Kalicki J."/>
            <person name="Ozersky P."/>
            <person name="Abbott S."/>
            <person name="Armstrong J."/>
            <person name="Belter E.A."/>
            <person name="Caruso L."/>
            <person name="Cedroni M."/>
            <person name="Cotton M."/>
            <person name="Davidson T."/>
            <person name="Desai A."/>
            <person name="Elliott G."/>
            <person name="Erb T."/>
            <person name="Fronick C."/>
            <person name="Gaige T."/>
            <person name="Haakenson W."/>
            <person name="Haglund K."/>
            <person name="Holmes A."/>
            <person name="Harkins R."/>
            <person name="Kim K."/>
            <person name="Kruchowski S.S."/>
            <person name="Strong C.M."/>
            <person name="Grewal N."/>
            <person name="Goyea E."/>
            <person name="Hou S."/>
            <person name="Levy A."/>
            <person name="Martinka S."/>
            <person name="Mead K."/>
            <person name="McLellan M.D."/>
            <person name="Meyer R."/>
            <person name="Randall-Maher J."/>
            <person name="Tomlinson C."/>
            <person name="Dauphin-Kohlberg S."/>
            <person name="Kozlowicz-Reilly A."/>
            <person name="Shah N."/>
            <person name="Swearengen-Shahid S."/>
            <person name="Snider J."/>
            <person name="Strong J.T."/>
            <person name="Thompson J."/>
            <person name="Yoakum M."/>
            <person name="Leonard S."/>
            <person name="Pearman C."/>
            <person name="Trani L."/>
            <person name="Radionenko M."/>
            <person name="Waligorski J.E."/>
            <person name="Wang C."/>
            <person name="Rock S.M."/>
            <person name="Tin-Wollam A.-M."/>
            <person name="Maupin R."/>
            <person name="Latreille P."/>
            <person name="Wendl M.C."/>
            <person name="Yang S.-P."/>
            <person name="Pohl C."/>
            <person name="Wallis J.W."/>
            <person name="Spieth J."/>
            <person name="Bieri T.A."/>
            <person name="Berkowicz N."/>
            <person name="Nelson J.O."/>
            <person name="Osborne J."/>
            <person name="Ding L."/>
            <person name="Meyer R."/>
            <person name="Sabo A."/>
            <person name="Shotland Y."/>
            <person name="Sinha P."/>
            <person name="Wohldmann P.E."/>
            <person name="Cook L.L."/>
            <person name="Hickenbotham M.T."/>
            <person name="Eldred J."/>
            <person name="Williams D."/>
            <person name="Jones T.A."/>
            <person name="She X."/>
            <person name="Ciccarelli F.D."/>
            <person name="Izaurralde E."/>
            <person name="Taylor J."/>
            <person name="Schmutz J."/>
            <person name="Myers R.M."/>
            <person name="Cox D.R."/>
            <person name="Huang X."/>
            <person name="McPherson J.D."/>
            <person name="Mardis E.R."/>
            <person name="Clifton S.W."/>
            <person name="Warren W.C."/>
            <person name="Chinwalla A.T."/>
            <person name="Eddy S.R."/>
            <person name="Marra M.A."/>
            <person name="Ovcharenko I."/>
            <person name="Furey T.S."/>
            <person name="Miller W."/>
            <person name="Eichler E.E."/>
            <person name="Bork P."/>
            <person name="Suyama M."/>
            <person name="Torrents D."/>
            <person name="Waterston R.H."/>
            <person name="Wilson R.K."/>
        </authorList>
    </citation>
    <scope>NUCLEOTIDE SEQUENCE [LARGE SCALE GENOMIC DNA]</scope>
</reference>
<reference key="5">
    <citation type="submission" date="2005-07" db="EMBL/GenBank/DDBJ databases">
        <authorList>
            <person name="Mural R.J."/>
            <person name="Istrail S."/>
            <person name="Sutton G.G."/>
            <person name="Florea L."/>
            <person name="Halpern A.L."/>
            <person name="Mobarry C.M."/>
            <person name="Lippert R."/>
            <person name="Walenz B."/>
            <person name="Shatkay H."/>
            <person name="Dew I."/>
            <person name="Miller J.R."/>
            <person name="Flanigan M.J."/>
            <person name="Edwards N.J."/>
            <person name="Bolanos R."/>
            <person name="Fasulo D."/>
            <person name="Halldorsson B.V."/>
            <person name="Hannenhalli S."/>
            <person name="Turner R."/>
            <person name="Yooseph S."/>
            <person name="Lu F."/>
            <person name="Nusskern D.R."/>
            <person name="Shue B.C."/>
            <person name="Zheng X.H."/>
            <person name="Zhong F."/>
            <person name="Delcher A.L."/>
            <person name="Huson D.H."/>
            <person name="Kravitz S.A."/>
            <person name="Mouchard L."/>
            <person name="Reinert K."/>
            <person name="Remington K.A."/>
            <person name="Clark A.G."/>
            <person name="Waterman M.S."/>
            <person name="Eichler E.E."/>
            <person name="Adams M.D."/>
            <person name="Hunkapiller M.W."/>
            <person name="Myers E.W."/>
            <person name="Venter J.C."/>
        </authorList>
    </citation>
    <scope>NUCLEOTIDE SEQUENCE [LARGE SCALE GENOMIC DNA]</scope>
</reference>
<reference key="6">
    <citation type="journal article" date="2004" name="Genome Res.">
        <title>The status, quality, and expansion of the NIH full-length cDNA project: the Mammalian Gene Collection (MGC).</title>
        <authorList>
            <consortium name="The MGC Project Team"/>
        </authorList>
    </citation>
    <scope>NUCLEOTIDE SEQUENCE [LARGE SCALE MRNA] (ISOFORMS 2 AND 3)</scope>
    <source>
        <tissue>Brain</tissue>
        <tissue>Pancreas</tissue>
        <tissue>Placenta</tissue>
    </source>
</reference>
<reference key="7">
    <citation type="journal article" date="2007" name="BMC Genomics">
        <title>The full-ORF clone resource of the German cDNA consortium.</title>
        <authorList>
            <person name="Bechtel S."/>
            <person name="Rosenfelder H."/>
            <person name="Duda A."/>
            <person name="Schmidt C.P."/>
            <person name="Ernst U."/>
            <person name="Wellenreuther R."/>
            <person name="Mehrle A."/>
            <person name="Schuster C."/>
            <person name="Bahr A."/>
            <person name="Bloecker H."/>
            <person name="Heubner D."/>
            <person name="Hoerlein A."/>
            <person name="Michel G."/>
            <person name="Wedler H."/>
            <person name="Koehrer K."/>
            <person name="Ottenwaelder B."/>
            <person name="Poustka A."/>
            <person name="Wiemann S."/>
            <person name="Schupp I."/>
        </authorList>
    </citation>
    <scope>NUCLEOTIDE SEQUENCE [LARGE SCALE MRNA] OF 1187-1336 (ISOFORM 1)</scope>
    <source>
        <tissue>Melanoma</tissue>
    </source>
</reference>
<reference key="8">
    <citation type="journal article" date="2006" name="Cell">
        <title>Global, in vivo, and site-specific phosphorylation dynamics in signaling networks.</title>
        <authorList>
            <person name="Olsen J.V."/>
            <person name="Blagoev B."/>
            <person name="Gnad F."/>
            <person name="Macek B."/>
            <person name="Kumar C."/>
            <person name="Mortensen P."/>
            <person name="Mann M."/>
        </authorList>
    </citation>
    <scope>PHOSPHORYLATION [LARGE SCALE ANALYSIS] AT SER-7</scope>
    <scope>IDENTIFICATION BY MASS SPECTROMETRY [LARGE SCALE ANALYSIS]</scope>
    <source>
        <tissue>Cervix carcinoma</tissue>
    </source>
</reference>
<reference key="9">
    <citation type="journal article" date="2008" name="Proc. Natl. Acad. Sci. U.S.A.">
        <title>A quantitative atlas of mitotic phosphorylation.</title>
        <authorList>
            <person name="Dephoure N."/>
            <person name="Zhou C."/>
            <person name="Villen J."/>
            <person name="Beausoleil S.A."/>
            <person name="Bakalarski C.E."/>
            <person name="Elledge S.J."/>
            <person name="Gygi S.P."/>
        </authorList>
    </citation>
    <scope>PHOSPHORYLATION [LARGE SCALE ANALYSIS] AT SER-1210</scope>
    <scope>IDENTIFICATION BY MASS SPECTROMETRY [LARGE SCALE ANALYSIS]</scope>
    <source>
        <tissue>Cervix carcinoma</tissue>
    </source>
</reference>
<reference key="10">
    <citation type="journal article" date="2009" name="Mol. Cell">
        <title>Molecular architecture of the human pre-mRNA 3' processing complex.</title>
        <authorList>
            <person name="Shi Y."/>
            <person name="Di Giammartino D.C."/>
            <person name="Taylor D."/>
            <person name="Sarkeshik A."/>
            <person name="Rice W.J."/>
            <person name="Yates J.R. III"/>
            <person name="Frank J."/>
            <person name="Manley J.L."/>
        </authorList>
    </citation>
    <scope>FUNCTION</scope>
    <scope>IDENTIFICATION IN THE 3' PRE-MRNA END PROCESSING COMPLEX</scope>
    <scope>SUBCELLULAR LOCATION</scope>
    <scope>INTERACTION WITH CPSF3</scope>
</reference>
<reference key="11">
    <citation type="journal article" date="2009" name="Sci. Signal.">
        <title>Quantitative phosphoproteomic analysis of T cell receptor signaling reveals system-wide modulation of protein-protein interactions.</title>
        <authorList>
            <person name="Mayya V."/>
            <person name="Lundgren D.H."/>
            <person name="Hwang S.-I."/>
            <person name="Rezaul K."/>
            <person name="Wu L."/>
            <person name="Eng J.K."/>
            <person name="Rodionov V."/>
            <person name="Han D.K."/>
        </authorList>
    </citation>
    <scope>IDENTIFICATION BY MASS SPECTROMETRY [LARGE SCALE ANALYSIS]</scope>
    <source>
        <tissue>Leukemic T-cell</tissue>
    </source>
</reference>
<reference key="12">
    <citation type="journal article" date="2009" name="Science">
        <title>Lysine acetylation targets protein complexes and co-regulates major cellular functions.</title>
        <authorList>
            <person name="Choudhary C."/>
            <person name="Kumar C."/>
            <person name="Gnad F."/>
            <person name="Nielsen M.L."/>
            <person name="Rehman M."/>
            <person name="Walther T.C."/>
            <person name="Olsen J.V."/>
            <person name="Mann M."/>
        </authorList>
    </citation>
    <scope>ACETYLATION [LARGE SCALE ANALYSIS] AT LYS-46</scope>
    <scope>IDENTIFICATION BY MASS SPECTROMETRY [LARGE SCALE ANALYSIS]</scope>
</reference>
<reference key="13">
    <citation type="journal article" date="2010" name="Sci. Signal.">
        <title>Quantitative phosphoproteomics reveals widespread full phosphorylation site occupancy during mitosis.</title>
        <authorList>
            <person name="Olsen J.V."/>
            <person name="Vermeulen M."/>
            <person name="Santamaria A."/>
            <person name="Kumar C."/>
            <person name="Miller M.L."/>
            <person name="Jensen L.J."/>
            <person name="Gnad F."/>
            <person name="Cox J."/>
            <person name="Jensen T.S."/>
            <person name="Nigg E.A."/>
            <person name="Brunak S."/>
            <person name="Mann M."/>
        </authorList>
    </citation>
    <scope>ACETYLATION [LARGE SCALE ANALYSIS] AT ALA-2</scope>
    <scope>PHOSPHORYLATION [LARGE SCALE ANALYSIS] AT SER-7 AND SER-1210</scope>
    <scope>CLEAVAGE OF INITIATOR METHIONINE [LARGE SCALE ANALYSIS]</scope>
    <scope>IDENTIFICATION BY MASS SPECTROMETRY [LARGE SCALE ANALYSIS]</scope>
    <source>
        <tissue>Cervix carcinoma</tissue>
    </source>
</reference>
<reference key="14">
    <citation type="journal article" date="2011" name="BMC Syst. Biol.">
        <title>Initial characterization of the human central proteome.</title>
        <authorList>
            <person name="Burkard T.R."/>
            <person name="Planyavsky M."/>
            <person name="Kaupe I."/>
            <person name="Breitwieser F.P."/>
            <person name="Buerckstuemmer T."/>
            <person name="Bennett K.L."/>
            <person name="Superti-Furga G."/>
            <person name="Colinge J."/>
        </authorList>
    </citation>
    <scope>IDENTIFICATION BY MASS SPECTROMETRY [LARGE SCALE ANALYSIS]</scope>
</reference>
<reference key="15">
    <citation type="journal article" date="2011" name="Sci. Signal.">
        <title>System-wide temporal characterization of the proteome and phosphoproteome of human embryonic stem cell differentiation.</title>
        <authorList>
            <person name="Rigbolt K.T."/>
            <person name="Prokhorova T.A."/>
            <person name="Akimov V."/>
            <person name="Henningsen J."/>
            <person name="Johansen P.T."/>
            <person name="Kratchmarova I."/>
            <person name="Kassem M."/>
            <person name="Mann M."/>
            <person name="Olsen J.V."/>
            <person name="Blagoev B."/>
        </authorList>
    </citation>
    <scope>ACETYLATION [LARGE SCALE ANALYSIS] AT ALA-2</scope>
    <scope>PHOSPHORYLATION [LARGE SCALE ANALYSIS] AT SER-7</scope>
    <scope>CLEAVAGE OF INITIATOR METHIONINE [LARGE SCALE ANALYSIS]</scope>
    <scope>IDENTIFICATION BY MASS SPECTROMETRY [LARGE SCALE ANALYSIS]</scope>
</reference>
<reference key="16">
    <citation type="journal article" date="2013" name="J. Proteome Res.">
        <title>Toward a comprehensive characterization of a human cancer cell phosphoproteome.</title>
        <authorList>
            <person name="Zhou H."/>
            <person name="Di Palma S."/>
            <person name="Preisinger C."/>
            <person name="Peng M."/>
            <person name="Polat A.N."/>
            <person name="Heck A.J."/>
            <person name="Mohammed S."/>
        </authorList>
    </citation>
    <scope>PHOSPHORYLATION [LARGE SCALE ANALYSIS] AT SER-7</scope>
    <scope>IDENTIFICATION BY MASS SPECTROMETRY [LARGE SCALE ANALYSIS]</scope>
    <source>
        <tissue>Cervix carcinoma</tissue>
        <tissue>Erythroleukemia</tissue>
    </source>
</reference>
<reference key="17">
    <citation type="journal article" date="2014" name="J. Proteomics">
        <title>An enzyme assisted RP-RPLC approach for in-depth analysis of human liver phosphoproteome.</title>
        <authorList>
            <person name="Bian Y."/>
            <person name="Song C."/>
            <person name="Cheng K."/>
            <person name="Dong M."/>
            <person name="Wang F."/>
            <person name="Huang J."/>
            <person name="Sun D."/>
            <person name="Wang L."/>
            <person name="Ye M."/>
            <person name="Zou H."/>
        </authorList>
    </citation>
    <scope>PHOSPHORYLATION [LARGE SCALE ANALYSIS] AT SER-1210</scope>
    <scope>IDENTIFICATION BY MASS SPECTROMETRY [LARGE SCALE ANALYSIS]</scope>
    <source>
        <tissue>Liver</tissue>
    </source>
</reference>
<reference key="18">
    <citation type="journal article" date="2014" name="Mol. Cell. Proteomics">
        <title>Immunoaffinity enrichment and mass spectrometry analysis of protein methylation.</title>
        <authorList>
            <person name="Guo A."/>
            <person name="Gu H."/>
            <person name="Zhou J."/>
            <person name="Mulhern D."/>
            <person name="Wang Y."/>
            <person name="Lee K.A."/>
            <person name="Yang V."/>
            <person name="Aguiar M."/>
            <person name="Kornhauser J."/>
            <person name="Jia X."/>
            <person name="Ren J."/>
            <person name="Beausoleil S.A."/>
            <person name="Silva J.C."/>
            <person name="Vemulapalli V."/>
            <person name="Bedford M.T."/>
            <person name="Comb M.J."/>
        </authorList>
    </citation>
    <scope>METHYLATION [LARGE SCALE ANALYSIS] AT ARG-782; ARG-915 AND ARG-1315</scope>
    <scope>IDENTIFICATION BY MASS SPECTROMETRY [LARGE SCALE ANALYSIS]</scope>
    <source>
        <tissue>Colon carcinoma</tissue>
    </source>
</reference>
<reference key="19">
    <citation type="journal article" date="2014" name="Nat. Struct. Mol. Biol.">
        <title>Uncovering global SUMOylation signaling networks in a site-specific manner.</title>
        <authorList>
            <person name="Hendriks I.A."/>
            <person name="D'Souza R.C."/>
            <person name="Yang B."/>
            <person name="Verlaan-de Vries M."/>
            <person name="Mann M."/>
            <person name="Vertegaal A.C."/>
        </authorList>
    </citation>
    <scope>SUMOYLATION [LARGE SCALE ANALYSIS] AT LYS-530</scope>
    <scope>IDENTIFICATION BY MASS SPECTROMETRY [LARGE SCALE ANALYSIS]</scope>
</reference>
<reference key="20">
    <citation type="journal article" date="2017" name="Nat. Struct. Mol. Biol.">
        <title>Site-specific mapping of the human SUMO proteome reveals co-modification with phosphorylation.</title>
        <authorList>
            <person name="Hendriks I.A."/>
            <person name="Lyon D."/>
            <person name="Young C."/>
            <person name="Jensen L.J."/>
            <person name="Vertegaal A.C."/>
            <person name="Nielsen M.L."/>
        </authorList>
    </citation>
    <scope>SUMOYLATION [LARGE SCALE ANALYSIS] AT LYS-526; LYS-530 AND LYS-560</scope>
    <scope>IDENTIFICATION BY MASS SPECTROMETRY [LARGE SCALE ANALYSIS]</scope>
</reference>
<proteinExistence type="evidence at protein level"/>
<keyword id="KW-0002">3D-structure</keyword>
<keyword id="KW-0007">Acetylation</keyword>
<keyword id="KW-0025">Alternative splicing</keyword>
<keyword id="KW-0176">Collagen</keyword>
<keyword id="KW-1017">Isopeptide bond</keyword>
<keyword id="KW-0488">Methylation</keyword>
<keyword id="KW-0507">mRNA processing</keyword>
<keyword id="KW-0539">Nucleus</keyword>
<keyword id="KW-0597">Phosphoprotein</keyword>
<keyword id="KW-1267">Proteomics identification</keyword>
<keyword id="KW-1185">Reference proteome</keyword>
<keyword id="KW-0677">Repeat</keyword>
<keyword id="KW-0832">Ubl conjugation</keyword>
<keyword id="KW-0853">WD repeat</keyword>
<feature type="initiator methionine" description="Removed" evidence="13 14">
    <location>
        <position position="1"/>
    </location>
</feature>
<feature type="chain" id="PRO_0000051382" description="pre-mRNA 3' end processing protein WDR33">
    <location>
        <begin position="2"/>
        <end position="1336"/>
    </location>
</feature>
<feature type="repeat" description="WD 1">
    <location>
        <begin position="117"/>
        <end position="156"/>
    </location>
</feature>
<feature type="repeat" description="WD 2">
    <location>
        <begin position="159"/>
        <end position="198"/>
    </location>
</feature>
<feature type="repeat" description="WD 3">
    <location>
        <begin position="200"/>
        <end position="239"/>
    </location>
</feature>
<feature type="repeat" description="WD 4">
    <location>
        <begin position="242"/>
        <end position="283"/>
    </location>
</feature>
<feature type="repeat" description="WD 5">
    <location>
        <begin position="286"/>
        <end position="325"/>
    </location>
</feature>
<feature type="repeat" description="WD 6">
    <location>
        <begin position="329"/>
        <end position="369"/>
    </location>
</feature>
<feature type="repeat" description="WD 7">
    <location>
        <begin position="373"/>
        <end position="412"/>
    </location>
</feature>
<feature type="domain" description="Collagen-like">
    <location>
        <begin position="618"/>
        <end position="770"/>
    </location>
</feature>
<feature type="region of interest" description="Disordered" evidence="2">
    <location>
        <begin position="568"/>
        <end position="1336"/>
    </location>
</feature>
<feature type="compositionally biased region" description="Pro residues" evidence="2">
    <location>
        <begin position="573"/>
        <end position="590"/>
    </location>
</feature>
<feature type="compositionally biased region" description="Polar residues" evidence="2">
    <location>
        <begin position="594"/>
        <end position="607"/>
    </location>
</feature>
<feature type="compositionally biased region" description="Low complexity" evidence="2">
    <location>
        <begin position="608"/>
        <end position="643"/>
    </location>
</feature>
<feature type="compositionally biased region" description="Pro residues" evidence="2">
    <location>
        <begin position="683"/>
        <end position="695"/>
    </location>
</feature>
<feature type="compositionally biased region" description="Low complexity" evidence="2">
    <location>
        <begin position="696"/>
        <end position="707"/>
    </location>
</feature>
<feature type="compositionally biased region" description="Low complexity" evidence="2">
    <location>
        <begin position="726"/>
        <end position="751"/>
    </location>
</feature>
<feature type="compositionally biased region" description="Low complexity" evidence="2">
    <location>
        <begin position="854"/>
        <end position="869"/>
    </location>
</feature>
<feature type="compositionally biased region" description="Low complexity" evidence="2">
    <location>
        <begin position="932"/>
        <end position="941"/>
    </location>
</feature>
<feature type="compositionally biased region" description="Basic and acidic residues" evidence="2">
    <location>
        <begin position="971"/>
        <end position="989"/>
    </location>
</feature>
<feature type="compositionally biased region" description="Basic and acidic residues" evidence="2">
    <location>
        <begin position="998"/>
        <end position="1034"/>
    </location>
</feature>
<feature type="compositionally biased region" description="Basic and acidic residues" evidence="2">
    <location>
        <begin position="1056"/>
        <end position="1068"/>
    </location>
</feature>
<feature type="compositionally biased region" description="Basic and acidic residues" evidence="2">
    <location>
        <begin position="1078"/>
        <end position="1122"/>
    </location>
</feature>
<feature type="compositionally biased region" description="Acidic residues" evidence="2">
    <location>
        <begin position="1130"/>
        <end position="1140"/>
    </location>
</feature>
<feature type="compositionally biased region" description="Basic and acidic residues" evidence="2">
    <location>
        <begin position="1141"/>
        <end position="1150"/>
    </location>
</feature>
<feature type="compositionally biased region" description="Basic residues" evidence="2">
    <location>
        <begin position="1151"/>
        <end position="1160"/>
    </location>
</feature>
<feature type="compositionally biased region" description="Basic and acidic residues" evidence="2">
    <location>
        <begin position="1169"/>
        <end position="1217"/>
    </location>
</feature>
<feature type="compositionally biased region" description="Basic and acidic residues" evidence="2">
    <location>
        <begin position="1242"/>
        <end position="1259"/>
    </location>
</feature>
<feature type="compositionally biased region" description="Basic and acidic residues" evidence="2">
    <location>
        <begin position="1281"/>
        <end position="1293"/>
    </location>
</feature>
<feature type="compositionally biased region" description="Low complexity" evidence="2">
    <location>
        <begin position="1301"/>
        <end position="1326"/>
    </location>
</feature>
<feature type="modified residue" description="N-acetylalanine" evidence="13 14">
    <location>
        <position position="2"/>
    </location>
</feature>
<feature type="modified residue" description="Phosphoserine" evidence="10 13 14 15">
    <location>
        <position position="7"/>
    </location>
</feature>
<feature type="modified residue" description="N6-acetyllysine" evidence="12">
    <location>
        <position position="46"/>
    </location>
</feature>
<feature type="modified residue" description="Omega-N-methylarginine" evidence="16">
    <location>
        <position position="782"/>
    </location>
</feature>
<feature type="modified residue" description="Asymmetric dimethylarginine" evidence="16">
    <location>
        <position position="915"/>
    </location>
</feature>
<feature type="modified residue" description="Omega-N-methylarginine" evidence="1">
    <location>
        <position position="987"/>
    </location>
</feature>
<feature type="modified residue" description="Omega-N-methylarginine" evidence="1">
    <location>
        <position position="1035"/>
    </location>
</feature>
<feature type="modified residue" description="Phosphoserine" evidence="11 13 17">
    <location>
        <position position="1210"/>
    </location>
</feature>
<feature type="modified residue" description="Omega-N-methylarginine" evidence="1">
    <location>
        <position position="1262"/>
    </location>
</feature>
<feature type="modified residue" description="Asymmetric dimethylarginine; alternate" evidence="16">
    <location>
        <position position="1315"/>
    </location>
</feature>
<feature type="modified residue" description="Omega-N-methylarginine; alternate" evidence="16">
    <location>
        <position position="1315"/>
    </location>
</feature>
<feature type="cross-link" description="Glycyl lysine isopeptide (Lys-Gly) (interchain with G-Cter in SUMO2)" evidence="19">
    <location>
        <position position="526"/>
    </location>
</feature>
<feature type="cross-link" description="Glycyl lysine isopeptide (Lys-Gly) (interchain with G-Cter in SUMO2)" evidence="18 19">
    <location>
        <position position="530"/>
    </location>
</feature>
<feature type="cross-link" description="Glycyl lysine isopeptide (Lys-Gly) (interchain with G-Cter in SUMO2)" evidence="19">
    <location>
        <position position="560"/>
    </location>
</feature>
<feature type="splice variant" id="VSP_041333" description="In isoform 2." evidence="6 7 8">
    <original>SFSPTDNKFATCSDDGTVRIWDFLRCHEERILRGHGADVKCVDWHPTKGLVVSGSKDSQQPIKFWDPKTGQSLATLHAHKNTVMEVKLNLNGNWLLTASRDHLCKLFDIRNLKEELQV</original>
    <variation>RFIHNIPFSVVPIVMVKLFSKCILGAEMHGLCQFLGNFLHPINTIFFFVFTHSPFCWHLSEVVLSRYQPLQYVRDVLSAAFCTGFLFSFMINNVYTLFLFIIYCVRQEYFIPNKEFSL</variation>
    <location>
        <begin position="209"/>
        <end position="326"/>
    </location>
</feature>
<feature type="splice variant" id="VSP_042684" description="In isoform 3." evidence="7">
    <original>GHGADVKCVDWHPTKG</original>
    <variation>DTCFHHCRCYFLSVKR</variation>
    <location>
        <begin position="242"/>
        <end position="257"/>
    </location>
</feature>
<feature type="splice variant" id="VSP_042685" description="In isoform 3." evidence="7">
    <location>
        <begin position="258"/>
        <end position="326"/>
    </location>
</feature>
<feature type="splice variant" id="VSP_041334" description="In isoform 2 and isoform 3." evidence="6 7 8">
    <location>
        <begin position="327"/>
        <end position="1336"/>
    </location>
</feature>
<feature type="sequence variant" id="VAR_046717" description="In dbSNP:rs11557686.">
    <original>A</original>
    <variation>S</variation>
    <location>
        <position position="33"/>
    </location>
</feature>
<feature type="sequence variant" id="VAR_053427" description="In dbSNP:rs12615078.">
    <original>P</original>
    <variation>R</variation>
    <location>
        <position position="711"/>
    </location>
</feature>
<feature type="sequence conflict" description="In Ref. 3; BAD97039." evidence="9" ref="3">
    <original>T</original>
    <variation>A</variation>
    <location>
        <position position="113"/>
    </location>
</feature>
<feature type="sequence conflict" description="In Ref. 1; BAB32435." evidence="9" ref="1">
    <original>G</original>
    <variation>S</variation>
    <location>
        <position position="715"/>
    </location>
</feature>
<feature type="helix" evidence="21">
    <location>
        <begin position="60"/>
        <end position="70"/>
    </location>
</feature>
<feature type="helix" evidence="21">
    <location>
        <begin position="76"/>
        <end position="78"/>
    </location>
</feature>
<feature type="helix" evidence="24">
    <location>
        <begin position="89"/>
        <end position="91"/>
    </location>
</feature>
<feature type="helix" evidence="21">
    <location>
        <begin position="95"/>
        <end position="97"/>
    </location>
</feature>
<feature type="helix" evidence="21">
    <location>
        <begin position="102"/>
        <end position="105"/>
    </location>
</feature>
<feature type="strand" evidence="21">
    <location>
        <begin position="109"/>
        <end position="114"/>
    </location>
</feature>
<feature type="strand" evidence="21">
    <location>
        <begin position="122"/>
        <end position="127"/>
    </location>
</feature>
<feature type="strand" evidence="21">
    <location>
        <begin position="131"/>
        <end position="138"/>
    </location>
</feature>
<feature type="strand" evidence="21">
    <location>
        <begin position="141"/>
        <end position="147"/>
    </location>
</feature>
<feature type="turn" evidence="21">
    <location>
        <begin position="148"/>
        <end position="150"/>
    </location>
</feature>
<feature type="strand" evidence="21">
    <location>
        <begin position="153"/>
        <end position="158"/>
    </location>
</feature>
<feature type="strand" evidence="21">
    <location>
        <begin position="164"/>
        <end position="169"/>
    </location>
</feature>
<feature type="strand" evidence="22">
    <location>
        <begin position="171"/>
        <end position="174"/>
    </location>
</feature>
<feature type="strand" evidence="21">
    <location>
        <begin position="176"/>
        <end position="180"/>
    </location>
</feature>
<feature type="strand" evidence="21">
    <location>
        <begin position="185"/>
        <end position="188"/>
    </location>
</feature>
<feature type="strand" evidence="21">
    <location>
        <begin position="194"/>
        <end position="198"/>
    </location>
</feature>
<feature type="strand" evidence="21">
    <location>
        <begin position="205"/>
        <end position="210"/>
    </location>
</feature>
<feature type="strand" evidence="21">
    <location>
        <begin position="214"/>
        <end position="221"/>
    </location>
</feature>
<feature type="strand" evidence="21">
    <location>
        <begin position="226"/>
        <end position="230"/>
    </location>
</feature>
<feature type="turn" evidence="21">
    <location>
        <begin position="231"/>
        <end position="234"/>
    </location>
</feature>
<feature type="strand" evidence="21">
    <location>
        <begin position="235"/>
        <end position="240"/>
    </location>
</feature>
<feature type="strand" evidence="21">
    <location>
        <begin position="243"/>
        <end position="245"/>
    </location>
</feature>
<feature type="strand" evidence="21">
    <location>
        <begin position="247"/>
        <end position="252"/>
    </location>
</feature>
<feature type="strand" evidence="21">
    <location>
        <begin position="254"/>
        <end position="257"/>
    </location>
</feature>
<feature type="strand" evidence="21">
    <location>
        <begin position="259"/>
        <end position="264"/>
    </location>
</feature>
<feature type="strand" evidence="21">
    <location>
        <begin position="266"/>
        <end position="268"/>
    </location>
</feature>
<feature type="strand" evidence="21">
    <location>
        <begin position="270"/>
        <end position="273"/>
    </location>
</feature>
<feature type="turn" evidence="21">
    <location>
        <begin position="275"/>
        <end position="277"/>
    </location>
</feature>
<feature type="strand" evidence="21">
    <location>
        <begin position="280"/>
        <end position="284"/>
    </location>
</feature>
<feature type="strand" evidence="21">
    <location>
        <begin position="291"/>
        <end position="296"/>
    </location>
</feature>
<feature type="strand" evidence="21">
    <location>
        <begin position="300"/>
        <end position="307"/>
    </location>
</feature>
<feature type="strand" evidence="21">
    <location>
        <begin position="310"/>
        <end position="318"/>
    </location>
</feature>
<feature type="strand" evidence="21">
    <location>
        <begin position="324"/>
        <end position="328"/>
    </location>
</feature>
<feature type="strand" evidence="21">
    <location>
        <begin position="334"/>
        <end position="339"/>
    </location>
</feature>
<feature type="strand" evidence="20">
    <location>
        <begin position="341"/>
        <end position="343"/>
    </location>
</feature>
<feature type="strand" evidence="21">
    <location>
        <begin position="344"/>
        <end position="354"/>
    </location>
</feature>
<feature type="strand" evidence="21">
    <location>
        <begin position="356"/>
        <end position="360"/>
    </location>
</feature>
<feature type="strand" evidence="21">
    <location>
        <begin position="368"/>
        <end position="370"/>
    </location>
</feature>
<feature type="strand" evidence="23">
    <location>
        <begin position="373"/>
        <end position="376"/>
    </location>
</feature>
<feature type="strand" evidence="21">
    <location>
        <begin position="378"/>
        <end position="383"/>
    </location>
</feature>
<feature type="strand" evidence="21">
    <location>
        <begin position="387"/>
        <end position="397"/>
    </location>
</feature>
<feature type="strand" evidence="21">
    <location>
        <begin position="399"/>
        <end position="403"/>
    </location>
</feature>
<feature type="turn" evidence="23">
    <location>
        <begin position="414"/>
        <end position="416"/>
    </location>
</feature>
<feature type="sequence conflict" description="In Ref. 3; BAD97039." evidence="9" ref="3">
    <original>R</original>
    <variation>Q</variation>
    <location sequence="Q9C0J8-2">
        <position position="274"/>
    </location>
</feature>
<feature type="sequence conflict" description="In Ref. 6; AAH05401." evidence="9" ref="6">
    <original>F</original>
    <variation>S</variation>
    <location sequence="Q9C0J8-2">
        <position position="306"/>
    </location>
</feature>
<sequence length="1336" mass="145891">MATEIGSPPRFFHMPRFQHQAPRQLFYKRPDFAQQQAMQQLTFDGKRMRKAVNRKTIDYNPSVIKYLENRIWQRDQRDMRAIQPDAGYYNDLVPPIGMLNNPMNAVTTKFVRTSTNKVKCPVFVVRWTPEGRRLVTGASSGEFTLWNGLTFNFETILQAHDSPVRAMTWSHNDMWMLTADHGGYVKYWQSNMNNVKMFQAHKEAIREASFSPTDNKFATCSDDGTVRIWDFLRCHEERILRGHGADVKCVDWHPTKGLVVSGSKDSQQPIKFWDPKTGQSLATLHAHKNTVMEVKLNLNGNWLLTASRDHLCKLFDIRNLKEELQVFRGHKKEATAVAWHPVHEGLFASGGSDGSLLFWHVGVEKEVGGMEMAHEGMIWSLAWHPLGHILCSGSNDHTSKFWTRNRPGDKMRDRYNLNLLPGMSEDGVEYDDLEPNSLAVIPGMGIPEQLKLAMEQEQMGKDESNEIEMTIPGLDWGMEEVMQKDQKKVPQKKVPYAKPIPAQFQQAWMQNKVPIPAPNEVLNDRKEDIKLEEKKKTQAEIEQEMATLQYTNPQLLEQLKIERLAQKQVEQIQPPPSSGTPLLGPQPFPGQGPMSQIPQGFQQPHPSQQMPMNMAQMGPPGPQGQFRPPGPQGQMGPQGPPLHQGGGGPQGFMGPQGPQGPPQGLPRPQDMHGPQGMQRHPGPHGPLGPQGPPGPQGSSGPQGHMGPQGPPGPQGHIGPQGPPGPQGHLGPQGPPGTQGMQGPPGPRGMQGPPHPHGIQGGPGSQGIQGPVSQGPLMGLNPRGMQGPPGPRENQGPAPQGMIMGHPPQEMRGPHPPGGLLGHGPQEMRGPQEIRGMQGPPPQGSMLGPPQELRGPPGSQSQQGPPQGSLGPPPQGGMQGPPGPQGQQNPARGPHPSQGPIPFQQQKTPLLGDGPRAPFNQEGQSTGPPPLIPGLGQQGAQGRIPPLNPGQGPGPNKGDSRGPPNHHMGPMSERRHEQSGGPEHGPERGPFRGGQDCRGPPDRRGPHPDFPDDFSRPDDFHPDKRFGHRLREFEGRGGPLPQEEKWRRGGPGPPFPPDHREFSEGDGRGAARGPPGAWEGRRPGDERFPRDPEDPRFRGRREESFRRGAPPRHEGRAPPRGRDGFPGPEDFGPEENFDASEEAARGRDLRGRGRGTPRGGRKGLLPTPDEFPRFEGGRKPDSWDGNREPGPGHEHFRDTPRPDHPPHDGHSPASRERSSSLQGMDMASLPPRKRPWHDGPGTSEHREMEAPGGPSEDRGGKGRGGPGPAQRVPKSGRSSSLDGEHHDGYHRDEPFGGPPGSGTPSRGGRSGSNWGRGSNMNSGPPRRGASRGGGRGR</sequence>
<gene>
    <name type="primary">WDR33</name>
    <name evidence="5" type="synonym">WDC146</name>
</gene>
<dbReference type="EMBL" id="AB044749">
    <property type="protein sequence ID" value="BAB32435.1"/>
    <property type="molecule type" value="mRNA"/>
</dbReference>
<dbReference type="EMBL" id="AK002156">
    <property type="protein sequence ID" value="BAA92113.1"/>
    <property type="molecule type" value="mRNA"/>
</dbReference>
<dbReference type="EMBL" id="AK223319">
    <property type="protein sequence ID" value="BAD97039.1"/>
    <property type="molecule type" value="mRNA"/>
</dbReference>
<dbReference type="EMBL" id="AC006011">
    <property type="protein sequence ID" value="AAX82033.1"/>
    <property type="molecule type" value="Genomic_DNA"/>
</dbReference>
<dbReference type="EMBL" id="CH471103">
    <property type="protein sequence ID" value="EAW95342.1"/>
    <property type="molecule type" value="Genomic_DNA"/>
</dbReference>
<dbReference type="EMBL" id="CH471103">
    <property type="protein sequence ID" value="EAW95343.1"/>
    <property type="molecule type" value="Genomic_DNA"/>
</dbReference>
<dbReference type="EMBL" id="BC005401">
    <property type="protein sequence ID" value="AAH05401.1"/>
    <property type="status" value="ALT_TERM"/>
    <property type="molecule type" value="mRNA"/>
</dbReference>
<dbReference type="EMBL" id="BC013990">
    <property type="protein sequence ID" value="AAH13990.1"/>
    <property type="molecule type" value="mRNA"/>
</dbReference>
<dbReference type="EMBL" id="BC068484">
    <property type="protein sequence ID" value="AAH68484.1"/>
    <property type="molecule type" value="mRNA"/>
</dbReference>
<dbReference type="EMBL" id="AL834365">
    <property type="protein sequence ID" value="CAH10688.1"/>
    <property type="molecule type" value="mRNA"/>
</dbReference>
<dbReference type="CCDS" id="CCDS2150.1">
    <molecule id="Q9C0J8-1"/>
</dbReference>
<dbReference type="CCDS" id="CCDS42746.1">
    <molecule id="Q9C0J8-3"/>
</dbReference>
<dbReference type="CCDS" id="CCDS46407.1">
    <molecule id="Q9C0J8-2"/>
</dbReference>
<dbReference type="RefSeq" id="NP_001006623.1">
    <molecule id="Q9C0J8-2"/>
    <property type="nucleotide sequence ID" value="NM_001006622.3"/>
</dbReference>
<dbReference type="RefSeq" id="NP_001006624.1">
    <molecule id="Q9C0J8-3"/>
    <property type="nucleotide sequence ID" value="NM_001006623.4"/>
</dbReference>
<dbReference type="RefSeq" id="NP_060853.3">
    <molecule id="Q9C0J8-1"/>
    <property type="nucleotide sequence ID" value="NM_018383.4"/>
</dbReference>
<dbReference type="RefSeq" id="XP_011509738.1">
    <molecule id="Q9C0J8-1"/>
    <property type="nucleotide sequence ID" value="XM_011511436.2"/>
</dbReference>
<dbReference type="RefSeq" id="XP_054198800.1">
    <molecule id="Q9C0J8-1"/>
    <property type="nucleotide sequence ID" value="XM_054342825.1"/>
</dbReference>
<dbReference type="PDB" id="6BLY">
    <property type="method" value="EM"/>
    <property type="resolution" value="3.36 A"/>
    <property type="chains" value="B=1-572"/>
</dbReference>
<dbReference type="PDB" id="6BM0">
    <property type="method" value="EM"/>
    <property type="resolution" value="3.80 A"/>
    <property type="chains" value="B=1-572"/>
</dbReference>
<dbReference type="PDB" id="6DNH">
    <property type="method" value="EM"/>
    <property type="resolution" value="3.40 A"/>
    <property type="chains" value="B=1-572"/>
</dbReference>
<dbReference type="PDB" id="6F9N">
    <property type="method" value="X-ray"/>
    <property type="resolution" value="2.50 A"/>
    <property type="chains" value="B=35-410"/>
</dbReference>
<dbReference type="PDB" id="6FUW">
    <property type="method" value="EM"/>
    <property type="resolution" value="3.07 A"/>
    <property type="chains" value="B=1-410"/>
</dbReference>
<dbReference type="PDB" id="6URG">
    <property type="method" value="EM"/>
    <property type="resolution" value="3.00 A"/>
    <property type="chains" value="B=1-572"/>
</dbReference>
<dbReference type="PDB" id="6URO">
    <property type="method" value="EM"/>
    <property type="resolution" value="3.60 A"/>
    <property type="chains" value="B=1-572"/>
</dbReference>
<dbReference type="PDB" id="8E3I">
    <property type="method" value="EM"/>
    <property type="resolution" value="2.53 A"/>
    <property type="chains" value="B=1-572"/>
</dbReference>
<dbReference type="PDB" id="8E3Q">
    <property type="method" value="EM"/>
    <property type="resolution" value="2.68 A"/>
    <property type="chains" value="B=1-572"/>
</dbReference>
<dbReference type="PDB" id="8R8R">
    <property type="method" value="EM"/>
    <property type="resolution" value="2.79 A"/>
    <property type="chains" value="B=1-413"/>
</dbReference>
<dbReference type="PDBsum" id="6BLY"/>
<dbReference type="PDBsum" id="6BM0"/>
<dbReference type="PDBsum" id="6DNH"/>
<dbReference type="PDBsum" id="6F9N"/>
<dbReference type="PDBsum" id="6FUW"/>
<dbReference type="PDBsum" id="6URG"/>
<dbReference type="PDBsum" id="6URO"/>
<dbReference type="PDBsum" id="8E3I"/>
<dbReference type="PDBsum" id="8E3Q"/>
<dbReference type="PDBsum" id="8R8R"/>
<dbReference type="EMDB" id="EMD-14185"/>
<dbReference type="EMDB" id="EMD-19008"/>
<dbReference type="EMDB" id="EMD-20860"/>
<dbReference type="EMDB" id="EMD-20861"/>
<dbReference type="EMDB" id="EMD-27866"/>
<dbReference type="EMDB" id="EMD-27870"/>
<dbReference type="EMDB" id="EMD-4225"/>
<dbReference type="EMDB" id="EMD-7112"/>
<dbReference type="EMDB" id="EMD-7113"/>
<dbReference type="EMDB" id="EMD-7114"/>
<dbReference type="SMR" id="Q9C0J8"/>
<dbReference type="BioGRID" id="120620">
    <property type="interactions" value="164"/>
</dbReference>
<dbReference type="ComplexPortal" id="CPX-2698">
    <property type="entry name" value="pre-mRNA cleavage and polyadenylation specificity factor complex"/>
</dbReference>
<dbReference type="FunCoup" id="Q9C0J8">
    <property type="interactions" value="4704"/>
</dbReference>
<dbReference type="IntAct" id="Q9C0J8">
    <property type="interactions" value="91"/>
</dbReference>
<dbReference type="MINT" id="Q9C0J8"/>
<dbReference type="STRING" id="9606.ENSP00000325377"/>
<dbReference type="GlyGen" id="Q9C0J8">
    <property type="glycosylation" value="3 sites, 1 O-linked glycan (2 sites)"/>
</dbReference>
<dbReference type="iPTMnet" id="Q9C0J8"/>
<dbReference type="MetOSite" id="Q9C0J8"/>
<dbReference type="PhosphoSitePlus" id="Q9C0J8"/>
<dbReference type="SwissPalm" id="Q9C0J8"/>
<dbReference type="BioMuta" id="WDR33"/>
<dbReference type="DMDM" id="209572695"/>
<dbReference type="jPOST" id="Q9C0J8"/>
<dbReference type="MassIVE" id="Q9C0J8"/>
<dbReference type="PaxDb" id="9606-ENSP00000325377"/>
<dbReference type="PeptideAtlas" id="Q9C0J8"/>
<dbReference type="ProteomicsDB" id="80062">
    <molecule id="Q9C0J8-1"/>
</dbReference>
<dbReference type="ProteomicsDB" id="80063">
    <molecule id="Q9C0J8-2"/>
</dbReference>
<dbReference type="ProteomicsDB" id="80064">
    <molecule id="Q9C0J8-3"/>
</dbReference>
<dbReference type="Pumba" id="Q9C0J8"/>
<dbReference type="Antibodypedia" id="18487">
    <property type="antibodies" value="105 antibodies from 20 providers"/>
</dbReference>
<dbReference type="DNASU" id="55339"/>
<dbReference type="Ensembl" id="ENST00000322313.9">
    <molecule id="Q9C0J8-1"/>
    <property type="protein sequence ID" value="ENSP00000325377.3"/>
    <property type="gene ID" value="ENSG00000136709.12"/>
</dbReference>
<dbReference type="Ensembl" id="ENST00000393006.5">
    <molecule id="Q9C0J8-3"/>
    <property type="protein sequence ID" value="ENSP00000376730.1"/>
    <property type="gene ID" value="ENSG00000136709.12"/>
</dbReference>
<dbReference type="Ensembl" id="ENST00000409658.7">
    <molecule id="Q9C0J8-2"/>
    <property type="protein sequence ID" value="ENSP00000387186.3"/>
    <property type="gene ID" value="ENSG00000136709.12"/>
</dbReference>
<dbReference type="GeneID" id="55339"/>
<dbReference type="KEGG" id="hsa:55339"/>
<dbReference type="MANE-Select" id="ENST00000322313.9">
    <property type="protein sequence ID" value="ENSP00000325377.3"/>
    <property type="RefSeq nucleotide sequence ID" value="NM_018383.5"/>
    <property type="RefSeq protein sequence ID" value="NP_060853.3"/>
</dbReference>
<dbReference type="UCSC" id="uc002tpg.3">
    <molecule id="Q9C0J8-1"/>
    <property type="organism name" value="human"/>
</dbReference>
<dbReference type="AGR" id="HGNC:25651"/>
<dbReference type="CTD" id="55339"/>
<dbReference type="DisGeNET" id="55339"/>
<dbReference type="GeneCards" id="WDR33"/>
<dbReference type="HGNC" id="HGNC:25651">
    <property type="gene designation" value="WDR33"/>
</dbReference>
<dbReference type="HPA" id="ENSG00000136709">
    <property type="expression patterns" value="Low tissue specificity"/>
</dbReference>
<dbReference type="MIM" id="618082">
    <property type="type" value="gene"/>
</dbReference>
<dbReference type="neXtProt" id="NX_Q9C0J8"/>
<dbReference type="OpenTargets" id="ENSG00000136709"/>
<dbReference type="PharmGKB" id="PA134943440"/>
<dbReference type="VEuPathDB" id="HostDB:ENSG00000136709"/>
<dbReference type="eggNOG" id="KOG0284">
    <property type="taxonomic scope" value="Eukaryota"/>
</dbReference>
<dbReference type="GeneTree" id="ENSGT00730000111130"/>
<dbReference type="HOGENOM" id="CLU_000288_77_3_1"/>
<dbReference type="InParanoid" id="Q9C0J8"/>
<dbReference type="OMA" id="RRHEQNS"/>
<dbReference type="OrthoDB" id="16717at2759"/>
<dbReference type="PAN-GO" id="Q9C0J8">
    <property type="GO annotations" value="2 GO annotations based on evolutionary models"/>
</dbReference>
<dbReference type="PhylomeDB" id="Q9C0J8"/>
<dbReference type="TreeFam" id="TF317659"/>
<dbReference type="PathwayCommons" id="Q9C0J8"/>
<dbReference type="Reactome" id="R-HSA-159231">
    <property type="pathway name" value="Transport of Mature mRNA Derived from an Intronless Transcript"/>
</dbReference>
<dbReference type="Reactome" id="R-HSA-72187">
    <property type="pathway name" value="mRNA 3'-end processing"/>
</dbReference>
<dbReference type="Reactome" id="R-HSA-72203">
    <property type="pathway name" value="Processing of Capped Intron-Containing Pre-mRNA"/>
</dbReference>
<dbReference type="Reactome" id="R-HSA-73856">
    <property type="pathway name" value="RNA Polymerase II Transcription Termination"/>
</dbReference>
<dbReference type="Reactome" id="R-HSA-77595">
    <property type="pathway name" value="Processing of Intronless Pre-mRNAs"/>
</dbReference>
<dbReference type="SignaLink" id="Q9C0J8"/>
<dbReference type="BioGRID-ORCS" id="55339">
    <property type="hits" value="702 hits in 1151 CRISPR screens"/>
</dbReference>
<dbReference type="CD-CODE" id="232F8A39">
    <property type="entry name" value="P-body"/>
</dbReference>
<dbReference type="ChiTaRS" id="WDR33">
    <property type="organism name" value="human"/>
</dbReference>
<dbReference type="GeneWiki" id="WDR33"/>
<dbReference type="GenomeRNAi" id="55339"/>
<dbReference type="Pharos" id="Q9C0J8">
    <property type="development level" value="Tbio"/>
</dbReference>
<dbReference type="PRO" id="PR:Q9C0J8"/>
<dbReference type="Proteomes" id="UP000005640">
    <property type="component" value="Chromosome 2"/>
</dbReference>
<dbReference type="RNAct" id="Q9C0J8">
    <property type="molecule type" value="protein"/>
</dbReference>
<dbReference type="Bgee" id="ENSG00000136709">
    <property type="expression patterns" value="Expressed in gingival epithelium and 188 other cell types or tissues"/>
</dbReference>
<dbReference type="ExpressionAtlas" id="Q9C0J8">
    <property type="expression patterns" value="baseline and differential"/>
</dbReference>
<dbReference type="GO" id="GO:0005581">
    <property type="term" value="C:collagen trimer"/>
    <property type="evidence" value="ECO:0007669"/>
    <property type="project" value="UniProtKB-KW"/>
</dbReference>
<dbReference type="GO" id="GO:0001650">
    <property type="term" value="C:fibrillar center"/>
    <property type="evidence" value="ECO:0000314"/>
    <property type="project" value="HPA"/>
</dbReference>
<dbReference type="GO" id="GO:0005847">
    <property type="term" value="C:mRNA cleavage and polyadenylation specificity factor complex"/>
    <property type="evidence" value="ECO:0000318"/>
    <property type="project" value="GO_Central"/>
</dbReference>
<dbReference type="GO" id="GO:0005654">
    <property type="term" value="C:nucleoplasm"/>
    <property type="evidence" value="ECO:0000314"/>
    <property type="project" value="HPA"/>
</dbReference>
<dbReference type="GO" id="GO:0005634">
    <property type="term" value="C:nucleus"/>
    <property type="evidence" value="ECO:0000314"/>
    <property type="project" value="UniProtKB"/>
</dbReference>
<dbReference type="GO" id="GO:0003723">
    <property type="term" value="F:RNA binding"/>
    <property type="evidence" value="ECO:0007005"/>
    <property type="project" value="UniProtKB"/>
</dbReference>
<dbReference type="GO" id="GO:0031124">
    <property type="term" value="P:mRNA 3'-end processing"/>
    <property type="evidence" value="ECO:0007669"/>
    <property type="project" value="InterPro"/>
</dbReference>
<dbReference type="GO" id="GO:0006301">
    <property type="term" value="P:postreplication repair"/>
    <property type="evidence" value="ECO:0000303"/>
    <property type="project" value="UniProtKB"/>
</dbReference>
<dbReference type="GO" id="GO:0007283">
    <property type="term" value="P:spermatogenesis"/>
    <property type="evidence" value="ECO:0000303"/>
    <property type="project" value="UniProtKB"/>
</dbReference>
<dbReference type="CDD" id="cd00200">
    <property type="entry name" value="WD40"/>
    <property type="match status" value="1"/>
</dbReference>
<dbReference type="FunFam" id="2.130.10.10:FF:000069">
    <property type="entry name" value="WD repeat domain 33"/>
    <property type="match status" value="1"/>
</dbReference>
<dbReference type="FunFam" id="2.130.10.10:FF:000077">
    <property type="entry name" value="WD repeat domain 33"/>
    <property type="match status" value="1"/>
</dbReference>
<dbReference type="FunFam" id="2.130.10.10:FF:000085">
    <property type="entry name" value="WD repeat domain 33"/>
    <property type="match status" value="1"/>
</dbReference>
<dbReference type="Gene3D" id="2.130.10.10">
    <property type="entry name" value="YVTN repeat-like/Quinoprotein amine dehydrogenase"/>
    <property type="match status" value="3"/>
</dbReference>
<dbReference type="InterPro" id="IPR008160">
    <property type="entry name" value="Collagen"/>
</dbReference>
<dbReference type="InterPro" id="IPR045245">
    <property type="entry name" value="Pfs2-like"/>
</dbReference>
<dbReference type="InterPro" id="IPR015943">
    <property type="entry name" value="WD40/YVTN_repeat-like_dom_sf"/>
</dbReference>
<dbReference type="InterPro" id="IPR036322">
    <property type="entry name" value="WD40_repeat_dom_sf"/>
</dbReference>
<dbReference type="InterPro" id="IPR001680">
    <property type="entry name" value="WD40_rpt"/>
</dbReference>
<dbReference type="PANTHER" id="PTHR22836:SF0">
    <property type="entry name" value="PRE-MRNA 3' END PROCESSING PROTEIN WDR33"/>
    <property type="match status" value="1"/>
</dbReference>
<dbReference type="PANTHER" id="PTHR22836">
    <property type="entry name" value="WD40 REPEAT PROTEIN"/>
    <property type="match status" value="1"/>
</dbReference>
<dbReference type="Pfam" id="PF01391">
    <property type="entry name" value="Collagen"/>
    <property type="match status" value="1"/>
</dbReference>
<dbReference type="Pfam" id="PF00400">
    <property type="entry name" value="WD40"/>
    <property type="match status" value="6"/>
</dbReference>
<dbReference type="SMART" id="SM00320">
    <property type="entry name" value="WD40"/>
    <property type="match status" value="7"/>
</dbReference>
<dbReference type="SUPFAM" id="SSF50978">
    <property type="entry name" value="WD40 repeat-like"/>
    <property type="match status" value="1"/>
</dbReference>
<dbReference type="PROSITE" id="PS50082">
    <property type="entry name" value="WD_REPEATS_2"/>
    <property type="match status" value="6"/>
</dbReference>
<dbReference type="PROSITE" id="PS50294">
    <property type="entry name" value="WD_REPEATS_REGION"/>
    <property type="match status" value="1"/>
</dbReference>
<protein>
    <recommendedName>
        <fullName>pre-mRNA 3' end processing protein WDR33</fullName>
    </recommendedName>
    <alternativeName>
        <fullName>WD repeat-containing protein 33</fullName>
    </alternativeName>
    <alternativeName>
        <fullName evidence="5">WD repeat-containing protein of 146 kDa</fullName>
    </alternativeName>
</protein>
<organism>
    <name type="scientific">Homo sapiens</name>
    <name type="common">Human</name>
    <dbReference type="NCBI Taxonomy" id="9606"/>
    <lineage>
        <taxon>Eukaryota</taxon>
        <taxon>Metazoa</taxon>
        <taxon>Chordata</taxon>
        <taxon>Craniata</taxon>
        <taxon>Vertebrata</taxon>
        <taxon>Euteleostomi</taxon>
        <taxon>Mammalia</taxon>
        <taxon>Eutheria</taxon>
        <taxon>Euarchontoglires</taxon>
        <taxon>Primates</taxon>
        <taxon>Haplorrhini</taxon>
        <taxon>Catarrhini</taxon>
        <taxon>Hominidae</taxon>
        <taxon>Homo</taxon>
    </lineage>
</organism>
<comment type="function">
    <text evidence="4">Essential for both cleavage and polyadenylation of pre-mRNA 3' ends.</text>
</comment>
<comment type="subunit">
    <text evidence="4">Component of the cleavage and polyadenylation specificity factor (CPSF) module of the pre-mRNA 3'-end processing complex. Interacts with CPSF3/CPSF73.</text>
</comment>
<comment type="subcellular location">
    <subcellularLocation>
        <location evidence="3 4">Nucleus</location>
    </subcellularLocation>
</comment>
<comment type="alternative products">
    <event type="alternative splicing"/>
    <isoform>
        <id>Q9C0J8-1</id>
        <name>1</name>
        <sequence type="displayed"/>
    </isoform>
    <isoform>
        <id>Q9C0J8-2</id>
        <name>2</name>
        <sequence type="described" ref="VSP_041333 VSP_041334"/>
    </isoform>
    <isoform>
        <id>Q9C0J8-3</id>
        <name>3</name>
        <sequence type="described" ref="VSP_042684 VSP_042685 VSP_041334"/>
    </isoform>
</comment>
<comment type="tissue specificity">
    <text evidence="3">Most highly expressed in testis.</text>
</comment>
<comment type="similarity">
    <text evidence="9">Belongs to the WD repeat WDR33 family.</text>
</comment>